<protein>
    <recommendedName>
        <fullName evidence="1">Chaperone protein DnaK</fullName>
    </recommendedName>
    <alternativeName>
        <fullName evidence="1">HSP70</fullName>
    </alternativeName>
    <alternativeName>
        <fullName evidence="1">Heat shock 70 kDa protein</fullName>
    </alternativeName>
    <alternativeName>
        <fullName evidence="1">Heat shock protein 70</fullName>
    </alternativeName>
</protein>
<reference key="1">
    <citation type="submission" date="2008-02" db="EMBL/GenBank/DDBJ databases">
        <title>Complete sequence of Shewanella woodyi ATCC 51908.</title>
        <authorList>
            <consortium name="US DOE Joint Genome Institute"/>
            <person name="Copeland A."/>
            <person name="Lucas S."/>
            <person name="Lapidus A."/>
            <person name="Glavina del Rio T."/>
            <person name="Dalin E."/>
            <person name="Tice H."/>
            <person name="Bruce D."/>
            <person name="Goodwin L."/>
            <person name="Pitluck S."/>
            <person name="Sims D."/>
            <person name="Brettin T."/>
            <person name="Detter J.C."/>
            <person name="Han C."/>
            <person name="Kuske C.R."/>
            <person name="Schmutz J."/>
            <person name="Larimer F."/>
            <person name="Land M."/>
            <person name="Hauser L."/>
            <person name="Kyrpides N."/>
            <person name="Lykidis A."/>
            <person name="Zhao J.-S."/>
            <person name="Richardson P."/>
        </authorList>
    </citation>
    <scope>NUCLEOTIDE SEQUENCE [LARGE SCALE GENOMIC DNA]</scope>
    <source>
        <strain>ATCC 51908 / MS32</strain>
    </source>
</reference>
<evidence type="ECO:0000255" key="1">
    <source>
        <dbReference type="HAMAP-Rule" id="MF_00332"/>
    </source>
</evidence>
<evidence type="ECO:0000256" key="2">
    <source>
        <dbReference type="SAM" id="MobiDB-lite"/>
    </source>
</evidence>
<feature type="chain" id="PRO_1000119758" description="Chaperone protein DnaK">
    <location>
        <begin position="1"/>
        <end position="640"/>
    </location>
</feature>
<feature type="region of interest" description="Disordered" evidence="2">
    <location>
        <begin position="601"/>
        <end position="640"/>
    </location>
</feature>
<feature type="compositionally biased region" description="Low complexity" evidence="2">
    <location>
        <begin position="601"/>
        <end position="621"/>
    </location>
</feature>
<feature type="compositionally biased region" description="Acidic residues" evidence="2">
    <location>
        <begin position="626"/>
        <end position="640"/>
    </location>
</feature>
<feature type="modified residue" description="Phosphothreonine; by autocatalysis" evidence="1">
    <location>
        <position position="198"/>
    </location>
</feature>
<proteinExistence type="inferred from homology"/>
<name>DNAK_SHEWM</name>
<gene>
    <name evidence="1" type="primary">dnaK</name>
    <name type="ordered locus">Swoo_3583</name>
</gene>
<comment type="function">
    <text evidence="1">Acts as a chaperone.</text>
</comment>
<comment type="induction">
    <text evidence="1">By stress conditions e.g. heat shock.</text>
</comment>
<comment type="similarity">
    <text evidence="1">Belongs to the heat shock protein 70 family.</text>
</comment>
<dbReference type="EMBL" id="CP000961">
    <property type="protein sequence ID" value="ACA87847.1"/>
    <property type="molecule type" value="Genomic_DNA"/>
</dbReference>
<dbReference type="RefSeq" id="WP_012326180.1">
    <property type="nucleotide sequence ID" value="NC_010506.1"/>
</dbReference>
<dbReference type="SMR" id="B1KRT2"/>
<dbReference type="STRING" id="392500.Swoo_3583"/>
<dbReference type="KEGG" id="swd:Swoo_3583"/>
<dbReference type="eggNOG" id="COG0443">
    <property type="taxonomic scope" value="Bacteria"/>
</dbReference>
<dbReference type="HOGENOM" id="CLU_005965_2_0_6"/>
<dbReference type="Proteomes" id="UP000002168">
    <property type="component" value="Chromosome"/>
</dbReference>
<dbReference type="GO" id="GO:0005524">
    <property type="term" value="F:ATP binding"/>
    <property type="evidence" value="ECO:0007669"/>
    <property type="project" value="UniProtKB-UniRule"/>
</dbReference>
<dbReference type="GO" id="GO:0140662">
    <property type="term" value="F:ATP-dependent protein folding chaperone"/>
    <property type="evidence" value="ECO:0007669"/>
    <property type="project" value="InterPro"/>
</dbReference>
<dbReference type="GO" id="GO:0051082">
    <property type="term" value="F:unfolded protein binding"/>
    <property type="evidence" value="ECO:0007669"/>
    <property type="project" value="InterPro"/>
</dbReference>
<dbReference type="CDD" id="cd10234">
    <property type="entry name" value="ASKHA_NBD_HSP70_DnaK-like"/>
    <property type="match status" value="1"/>
</dbReference>
<dbReference type="FunFam" id="2.60.34.10:FF:000014">
    <property type="entry name" value="Chaperone protein DnaK HSP70"/>
    <property type="match status" value="1"/>
</dbReference>
<dbReference type="FunFam" id="1.20.1270.10:FF:000001">
    <property type="entry name" value="Molecular chaperone DnaK"/>
    <property type="match status" value="1"/>
</dbReference>
<dbReference type="FunFam" id="3.30.420.40:FF:000004">
    <property type="entry name" value="Molecular chaperone DnaK"/>
    <property type="match status" value="1"/>
</dbReference>
<dbReference type="FunFam" id="3.90.640.10:FF:000003">
    <property type="entry name" value="Molecular chaperone DnaK"/>
    <property type="match status" value="1"/>
</dbReference>
<dbReference type="Gene3D" id="1.20.1270.10">
    <property type="match status" value="1"/>
</dbReference>
<dbReference type="Gene3D" id="3.30.420.40">
    <property type="match status" value="2"/>
</dbReference>
<dbReference type="Gene3D" id="3.90.640.10">
    <property type="entry name" value="Actin, Chain A, domain 4"/>
    <property type="match status" value="1"/>
</dbReference>
<dbReference type="Gene3D" id="2.60.34.10">
    <property type="entry name" value="Substrate Binding Domain Of DNAk, Chain A, domain 1"/>
    <property type="match status" value="1"/>
</dbReference>
<dbReference type="HAMAP" id="MF_00332">
    <property type="entry name" value="DnaK"/>
    <property type="match status" value="1"/>
</dbReference>
<dbReference type="InterPro" id="IPR043129">
    <property type="entry name" value="ATPase_NBD"/>
</dbReference>
<dbReference type="InterPro" id="IPR012725">
    <property type="entry name" value="Chaperone_DnaK"/>
</dbReference>
<dbReference type="InterPro" id="IPR018181">
    <property type="entry name" value="Heat_shock_70_CS"/>
</dbReference>
<dbReference type="InterPro" id="IPR029048">
    <property type="entry name" value="HSP70_C_sf"/>
</dbReference>
<dbReference type="InterPro" id="IPR029047">
    <property type="entry name" value="HSP70_peptide-bd_sf"/>
</dbReference>
<dbReference type="InterPro" id="IPR013126">
    <property type="entry name" value="Hsp_70_fam"/>
</dbReference>
<dbReference type="NCBIfam" id="NF001413">
    <property type="entry name" value="PRK00290.1"/>
    <property type="match status" value="1"/>
</dbReference>
<dbReference type="NCBIfam" id="TIGR02350">
    <property type="entry name" value="prok_dnaK"/>
    <property type="match status" value="1"/>
</dbReference>
<dbReference type="PANTHER" id="PTHR19375">
    <property type="entry name" value="HEAT SHOCK PROTEIN 70KDA"/>
    <property type="match status" value="1"/>
</dbReference>
<dbReference type="Pfam" id="PF00012">
    <property type="entry name" value="HSP70"/>
    <property type="match status" value="1"/>
</dbReference>
<dbReference type="PRINTS" id="PR00301">
    <property type="entry name" value="HEATSHOCK70"/>
</dbReference>
<dbReference type="SUPFAM" id="SSF53067">
    <property type="entry name" value="Actin-like ATPase domain"/>
    <property type="match status" value="2"/>
</dbReference>
<dbReference type="SUPFAM" id="SSF100920">
    <property type="entry name" value="Heat shock protein 70kD (HSP70), peptide-binding domain"/>
    <property type="match status" value="1"/>
</dbReference>
<dbReference type="PROSITE" id="PS00297">
    <property type="entry name" value="HSP70_1"/>
    <property type="match status" value="1"/>
</dbReference>
<dbReference type="PROSITE" id="PS00329">
    <property type="entry name" value="HSP70_2"/>
    <property type="match status" value="1"/>
</dbReference>
<dbReference type="PROSITE" id="PS01036">
    <property type="entry name" value="HSP70_3"/>
    <property type="match status" value="1"/>
</dbReference>
<keyword id="KW-0067">ATP-binding</keyword>
<keyword id="KW-0143">Chaperone</keyword>
<keyword id="KW-0547">Nucleotide-binding</keyword>
<keyword id="KW-0597">Phosphoprotein</keyword>
<keyword id="KW-1185">Reference proteome</keyword>
<keyword id="KW-0346">Stress response</keyword>
<accession>B1KRT2</accession>
<organism>
    <name type="scientific">Shewanella woodyi (strain ATCC 51908 / MS32)</name>
    <dbReference type="NCBI Taxonomy" id="392500"/>
    <lineage>
        <taxon>Bacteria</taxon>
        <taxon>Pseudomonadati</taxon>
        <taxon>Pseudomonadota</taxon>
        <taxon>Gammaproteobacteria</taxon>
        <taxon>Alteromonadales</taxon>
        <taxon>Shewanellaceae</taxon>
        <taxon>Shewanella</taxon>
    </lineage>
</organism>
<sequence>MGKIIGIDLGTTNSCVAVLDGDKARVLENAEGDRTTPSIIAYTGEETLVGQPAKRQAVTNPTNTFFAIKRLIGRRFKDDEVQRDVDIMPFKIIGADNGDAWVEAHDKKMAPPQVSAEILKKMKKTAEDFLGEEVTEAVITVPAYFNDSQRQATKDAGRIAGLEVKRIINEPTAAALAYGIDKKQGDNIVAVYDLGGGTFDISIIEIDSVDGEQTFEVLATNGDTHLGGEDFDNRLIKYLADEFEKEQGMNLRNDPLAMQRLKEAAEKAKIELSSTTQTEVNLPYITADASGPKHLVVKVTRAKLESLVEDLVTRTLEPLKVALADADLSVSDVNEVILVGGQTRMPKVRAEVSAFFGKELRQDVNPDEAVAIGAAVQAGVLSGDVKDVLLLDVTPLSLGIETMGSVMTKLIEKNTTIPTKASQTFSTADDNQAAVTIHVLQGERKQSSGNKSLGQFNLEGIEPAPRGMPQIEVAFDIDADGILHVSATDKKTGKAQNITIKASSGLSDEEVEAMVRDAEAHADEDAKFEELVTARNQADGMVHATKKQIEEAGEALPAEDKEKIETAMSAVETAVKGSDKEAIEKSTQELMEASSKLMEIAQAKAQAEQGQQAPEGEAQAAKPDEDVVDAEFEEVKDDKK</sequence>